<keyword id="KW-0007">Acetylation</keyword>
<keyword id="KW-0067">ATP-binding</keyword>
<keyword id="KW-0963">Cytoplasm</keyword>
<keyword id="KW-0206">Cytoskeleton</keyword>
<keyword id="KW-0378">Hydrolase</keyword>
<keyword id="KW-0488">Methylation</keyword>
<keyword id="KW-0547">Nucleotide-binding</keyword>
<keyword id="KW-0539">Nucleus</keyword>
<keyword id="KW-0558">Oxidation</keyword>
<keyword id="KW-1185">Reference proteome</keyword>
<keyword id="KW-0832">Ubl conjugation</keyword>
<comment type="function">
    <text evidence="2 5">Actin is a highly conserved protein that polymerizes to produce filaments that form cross-linked networks in the cytoplasm of cells (By similarity). Actin exists in both monomeric (G-actin) and polymeric (F-actin) forms, both forms playing key functions, such as cell motility and contraction (By similarity). In addition to their role in the cytoplasmic cytoskeleton, G- and F-actin also localize in the nucleus, and regulate gene transcription and motility and repair of damaged DNA (By similarity). Plays a role in the assembly of the gamma-tubulin ring complex (gTuRC), which regulates the minus-end nucleation of alpha-beta tubulin heterodimers that grow into microtubule protafilaments (By similarity). Part of the ACTR1A/ACTB filament around which the dynactin complex is built (By similarity). The dynactin multiprotein complex activates the molecular motor dynein for ultra-processive transport along microtubules (By similarity).</text>
</comment>
<comment type="catalytic activity">
    <reaction evidence="4">
        <text>ATP + H2O = ADP + phosphate + H(+)</text>
        <dbReference type="Rhea" id="RHEA:13065"/>
        <dbReference type="ChEBI" id="CHEBI:15377"/>
        <dbReference type="ChEBI" id="CHEBI:15378"/>
        <dbReference type="ChEBI" id="CHEBI:30616"/>
        <dbReference type="ChEBI" id="CHEBI:43474"/>
        <dbReference type="ChEBI" id="CHEBI:456216"/>
    </reaction>
</comment>
<comment type="subunit">
    <text evidence="1 2 3 5">Polymerization of globular actin (G-actin) leads to a structural filament (F-actin) in the form of a two-stranded helix (By similarity). Each actin can bind to 4 others (By similarity). Identified in a IGF2BP1-dependent mRNP granule complex containing untranslated mRNAs (By similarity). Component of the BAF complex, which includes at least actin (ACTB), ARID1A, ARID1B/BAF250, SMARCA2, SMARCA4/BRG1, ACTL6A/BAF53, ACTL6B/BAF53B, SMARCE1/BAF57 SMARCC1/BAF155, SMARCC2/BAF170, SMARCB1/SNF5/INI1, and one or more of SMARCD1/BAF60A, SMARCD2/BAF60B, or SMARCD3/BAF60C (By similarity). In muscle cells, the BAF complex also contains DPF3 (By similarity). Found in a complex with XPO6, Ran, ACTB and PFN1 (By similarity). Interacts with PFN1 (By similarity). Interacts with XPO6 and EMD (By similarity). Interacts with ERBB2 (By similarity). Interacts with GCSAM (By similarity). Interacts with TBC1D21 (By similarity). Interacts with CPNE1 (via VWFA domain) and CPNE4 (via VWFA domain) (By similarity). Interacts with DHX9 (via C-terminus); this interaction is direct and mediates the attachment to nuclear ribonucleoprotein complexes (By similarity). Interacts with FAM107A (By similarity). Associates with the gamma-tubulin ring complex (gTuRC) consisting of TUBGCP2, TUBGCP3, TUBGCP4, TUBGCP5 and TUBGCP6 and gamma-tubulin TUBG1 or TUBG2; within the complex, interacts with TUBGCP3 and TUBGCP6 to form a luminal bridge with MZT1 that stabilizes the initial structure during complex assembly (By similarity). Part of the ACTR1A/ACTB filament around which the dynactin complex is built (By similarity). The filament contains 8 copies of ACTR1A and 1 ACTB (By similarity). Interacts with TPRN which forms ring-like structures in the stereocilium taper region; the interaction may stabilize stereocilia in inner ear hair cells (By similarity). Interacts with AMOTL2 (via N-terminus), the interaction facilitates binding of cell junction complexes to actin fibers in endothelial cells (By similarity).</text>
</comment>
<comment type="subcellular location">
    <subcellularLocation>
        <location evidence="2">Cytoplasm</location>
        <location evidence="2">Cytoskeleton</location>
    </subcellularLocation>
    <subcellularLocation>
        <location evidence="2">Nucleus</location>
    </subcellularLocation>
    <text evidence="2">Localized in cytoplasmic mRNP granules containing untranslated mRNAs.</text>
</comment>
<comment type="PTM">
    <molecule>Actin, cytoplasmic 1</molecule>
    <text evidence="2">N-terminal cleavage of acetylated methionine of immature cytoplasmic actin by ACTMAP.</text>
</comment>
<comment type="PTM">
    <text evidence="2">ISGylated.</text>
</comment>
<comment type="PTM">
    <text evidence="3">Oxidation of Met-44 and Met-47 by MICALs (MICAL1, MICAL2 or MICAL3) to form methionine sulfoxide promotes actin filament depolymerization. MICAL1 and MICAL2 produce the (R)-S-oxide form. The (R)-S-oxide form is reverted by MSRB1 and MSRB2, which promote actin repolymerization.</text>
</comment>
<comment type="PTM">
    <text evidence="2">Monomethylation at Lys-84 (K84me1) regulates actin-myosin interaction and actomyosin-dependent processes. Demethylation by ALKBH4 is required for maintaining actomyosin dynamics supporting normal cleavage furrow ingression during cytokinesis and cell migration.</text>
</comment>
<comment type="PTM">
    <molecule>Actin, cytoplasmic 1, N-terminally processed</molecule>
    <text evidence="2">N-terminal acetylation by NAA80 affects actin filament depolymerization and elongation, including elongation driven by formins. In contrast, filament nucleation by the Arp2/3 complex is not affected.</text>
</comment>
<comment type="PTM">
    <text evidence="2 3">Methylated at His-73 by SETD3 (By similarity). Methylation at His-73 is required for smooth muscle contraction of the laboring uterus during delivery (By similarity).</text>
</comment>
<comment type="miscellaneous">
    <text evidence="2">In vertebrates 3 main groups of actin isoforms, alpha, beta and gamma have been identified. The alpha actins are found in muscle tissues and are a major constituent of the contractile apparatus. The beta and gamma actins coexist in most cell types as components of the cytoskeleton and as mediators of internal cell motility.</text>
</comment>
<comment type="similarity">
    <text evidence="6">Belongs to the actin family.</text>
</comment>
<evidence type="ECO:0000250" key="1">
    <source>
        <dbReference type="UniProtKB" id="O18840"/>
    </source>
</evidence>
<evidence type="ECO:0000250" key="2">
    <source>
        <dbReference type="UniProtKB" id="P60709"/>
    </source>
</evidence>
<evidence type="ECO:0000250" key="3">
    <source>
        <dbReference type="UniProtKB" id="P60710"/>
    </source>
</evidence>
<evidence type="ECO:0000250" key="4">
    <source>
        <dbReference type="UniProtKB" id="P68137"/>
    </source>
</evidence>
<evidence type="ECO:0000250" key="5">
    <source>
        <dbReference type="UniProtKB" id="Q6QAQ1"/>
    </source>
</evidence>
<evidence type="ECO:0000305" key="6"/>
<organism>
    <name type="scientific">Pongo abelii</name>
    <name type="common">Sumatran orangutan</name>
    <name type="synonym">Pongo pygmaeus abelii</name>
    <dbReference type="NCBI Taxonomy" id="9601"/>
    <lineage>
        <taxon>Eukaryota</taxon>
        <taxon>Metazoa</taxon>
        <taxon>Chordata</taxon>
        <taxon>Craniata</taxon>
        <taxon>Vertebrata</taxon>
        <taxon>Euteleostomi</taxon>
        <taxon>Mammalia</taxon>
        <taxon>Eutheria</taxon>
        <taxon>Euarchontoglires</taxon>
        <taxon>Primates</taxon>
        <taxon>Haplorrhini</taxon>
        <taxon>Catarrhini</taxon>
        <taxon>Hominidae</taxon>
        <taxon>Pongo</taxon>
    </lineage>
</organism>
<sequence length="375" mass="41737">MDDDIAALVVDNGSGMCKAGFAGDDAPRAVFPSIVGRPRHQGVMVGMGQKDSYVGDEAQSKRGILTLKYPIEHGIVTNWDDMEKIWHHTFYNELRVAPEEHPVLLTEAPLNPKANREKMTQIMFETFNTPAMYVAIQAVLSLYASGRTTGIVMDSGDGVTHTVPIYEGYALPHAILRLDLAGRDLTDYLMKILTERGYSFTTTAEREIVRDIKEKLCYVALDFEQEMATAASSSSLEKSYELPDGQVITIGNERFRCPEALFQPSFLGMESCGIHETTFNSIMKCDVDIRKDLYANTVLSGGTTMYPGIADRMQKEITALAPSTMKIKIIAPPERKYSVWIGGSILASLSTFQQMWISKQEYDESGPSIVHRKCF</sequence>
<protein>
    <recommendedName>
        <fullName>Actin, cytoplasmic 1</fullName>
        <ecNumber evidence="4">3.6.4.-</ecNumber>
    </recommendedName>
    <alternativeName>
        <fullName>Beta-actin</fullName>
    </alternativeName>
    <component>
        <recommendedName>
            <fullName>Actin, cytoplasmic 1, N-terminally processed</fullName>
        </recommendedName>
    </component>
</protein>
<reference key="1">
    <citation type="submission" date="2004-11" db="EMBL/GenBank/DDBJ databases">
        <authorList>
            <consortium name="The German cDNA consortium"/>
        </authorList>
    </citation>
    <scope>NUCLEOTIDE SEQUENCE [LARGE SCALE MRNA]</scope>
    <source>
        <tissue>Brain cortex</tissue>
    </source>
</reference>
<dbReference type="EC" id="3.6.4.-" evidence="4"/>
<dbReference type="EMBL" id="CR860530">
    <property type="protein sequence ID" value="CAH92656.1"/>
    <property type="molecule type" value="mRNA"/>
</dbReference>
<dbReference type="EMBL" id="CR860982">
    <property type="protein sequence ID" value="CAH93084.1"/>
    <property type="molecule type" value="mRNA"/>
</dbReference>
<dbReference type="RefSeq" id="NP_001126826.1">
    <property type="nucleotide sequence ID" value="NM_001133354.1"/>
</dbReference>
<dbReference type="SMR" id="Q5R6G0"/>
<dbReference type="FunCoup" id="Q5R6G0">
    <property type="interactions" value="2736"/>
</dbReference>
<dbReference type="STRING" id="9601.ENSPPYP00000019427"/>
<dbReference type="Ensembl" id="ENSPPYT00000020193.3">
    <property type="protein sequence ID" value="ENSPPYP00000019427.2"/>
    <property type="gene ID" value="ENSPPYG00000017336.3"/>
</dbReference>
<dbReference type="GeneID" id="100173832"/>
<dbReference type="KEGG" id="pon:100173832"/>
<dbReference type="CTD" id="60"/>
<dbReference type="eggNOG" id="KOG0676">
    <property type="taxonomic scope" value="Eukaryota"/>
</dbReference>
<dbReference type="GeneTree" id="ENSGT00950000182960"/>
<dbReference type="HOGENOM" id="CLU_027965_0_2_1"/>
<dbReference type="InParanoid" id="Q5R6G0"/>
<dbReference type="OMA" id="FHTTAER"/>
<dbReference type="OrthoDB" id="9816605at2759"/>
<dbReference type="TreeFam" id="TF354237"/>
<dbReference type="Proteomes" id="UP000001595">
    <property type="component" value="Unplaced"/>
</dbReference>
<dbReference type="GO" id="GO:0015629">
    <property type="term" value="C:actin cytoskeleton"/>
    <property type="evidence" value="ECO:0000250"/>
    <property type="project" value="UniProtKB"/>
</dbReference>
<dbReference type="GO" id="GO:0005912">
    <property type="term" value="C:adherens junction"/>
    <property type="evidence" value="ECO:0007669"/>
    <property type="project" value="Ensembl"/>
</dbReference>
<dbReference type="GO" id="GO:0043296">
    <property type="term" value="C:apical junction complex"/>
    <property type="evidence" value="ECO:0007669"/>
    <property type="project" value="Ensembl"/>
</dbReference>
<dbReference type="GO" id="GO:0005903">
    <property type="term" value="C:brush border"/>
    <property type="evidence" value="ECO:0007669"/>
    <property type="project" value="Ensembl"/>
</dbReference>
<dbReference type="GO" id="GO:0044305">
    <property type="term" value="C:calyx of Held"/>
    <property type="evidence" value="ECO:0007669"/>
    <property type="project" value="Ensembl"/>
</dbReference>
<dbReference type="GO" id="GO:0030863">
    <property type="term" value="C:cortical cytoskeleton"/>
    <property type="evidence" value="ECO:0007669"/>
    <property type="project" value="Ensembl"/>
</dbReference>
<dbReference type="GO" id="GO:0036464">
    <property type="term" value="C:cytoplasmic ribonucleoprotein granule"/>
    <property type="evidence" value="ECO:0007669"/>
    <property type="project" value="Ensembl"/>
</dbReference>
<dbReference type="GO" id="GO:0005856">
    <property type="term" value="C:cytoskeleton"/>
    <property type="evidence" value="ECO:0000250"/>
    <property type="project" value="AgBase"/>
</dbReference>
<dbReference type="GO" id="GO:0005829">
    <property type="term" value="C:cytosol"/>
    <property type="evidence" value="ECO:0007669"/>
    <property type="project" value="Ensembl"/>
</dbReference>
<dbReference type="GO" id="GO:0097433">
    <property type="term" value="C:dense body"/>
    <property type="evidence" value="ECO:0000250"/>
    <property type="project" value="AgBase"/>
</dbReference>
<dbReference type="GO" id="GO:0005925">
    <property type="term" value="C:focal adhesion"/>
    <property type="evidence" value="ECO:0000250"/>
    <property type="project" value="AgBase"/>
</dbReference>
<dbReference type="GO" id="GO:0098978">
    <property type="term" value="C:glutamatergic synapse"/>
    <property type="evidence" value="ECO:0007669"/>
    <property type="project" value="Ensembl"/>
</dbReference>
<dbReference type="GO" id="GO:0030027">
    <property type="term" value="C:lamellipodium"/>
    <property type="evidence" value="ECO:0007669"/>
    <property type="project" value="Ensembl"/>
</dbReference>
<dbReference type="GO" id="GO:0035267">
    <property type="term" value="C:NuA4 histone acetyltransferase complex"/>
    <property type="evidence" value="ECO:0007669"/>
    <property type="project" value="Ensembl"/>
</dbReference>
<dbReference type="GO" id="GO:0000786">
    <property type="term" value="C:nucleosome"/>
    <property type="evidence" value="ECO:0007669"/>
    <property type="project" value="Ensembl"/>
</dbReference>
<dbReference type="GO" id="GO:0005634">
    <property type="term" value="C:nucleus"/>
    <property type="evidence" value="ECO:0000250"/>
    <property type="project" value="UniProtKB"/>
</dbReference>
<dbReference type="GO" id="GO:0005886">
    <property type="term" value="C:plasma membrane"/>
    <property type="evidence" value="ECO:0000250"/>
    <property type="project" value="AgBase"/>
</dbReference>
<dbReference type="GO" id="GO:0098871">
    <property type="term" value="C:postsynaptic actin cytoskeleton"/>
    <property type="evidence" value="ECO:0007669"/>
    <property type="project" value="Ensembl"/>
</dbReference>
<dbReference type="GO" id="GO:0032991">
    <property type="term" value="C:protein-containing complex"/>
    <property type="evidence" value="ECO:0000250"/>
    <property type="project" value="UniProtKB"/>
</dbReference>
<dbReference type="GO" id="GO:1990904">
    <property type="term" value="C:ribonucleoprotein complex"/>
    <property type="evidence" value="ECO:0007669"/>
    <property type="project" value="Ensembl"/>
</dbReference>
<dbReference type="GO" id="GO:0098685">
    <property type="term" value="C:Schaffer collateral - CA1 synapse"/>
    <property type="evidence" value="ECO:0007669"/>
    <property type="project" value="Ensembl"/>
</dbReference>
<dbReference type="GO" id="GO:0070160">
    <property type="term" value="C:tight junction"/>
    <property type="evidence" value="ECO:0007669"/>
    <property type="project" value="Ensembl"/>
</dbReference>
<dbReference type="GO" id="GO:0005524">
    <property type="term" value="F:ATP binding"/>
    <property type="evidence" value="ECO:0007669"/>
    <property type="project" value="UniProtKB-KW"/>
</dbReference>
<dbReference type="GO" id="GO:0016887">
    <property type="term" value="F:ATP hydrolysis activity"/>
    <property type="evidence" value="ECO:0007669"/>
    <property type="project" value="Ensembl"/>
</dbReference>
<dbReference type="GO" id="GO:0042802">
    <property type="term" value="F:identical protein binding"/>
    <property type="evidence" value="ECO:0007669"/>
    <property type="project" value="Ensembl"/>
</dbReference>
<dbReference type="GO" id="GO:0019894">
    <property type="term" value="F:kinesin binding"/>
    <property type="evidence" value="ECO:0007669"/>
    <property type="project" value="Ensembl"/>
</dbReference>
<dbReference type="GO" id="GO:0050998">
    <property type="term" value="F:nitric-oxide synthase binding"/>
    <property type="evidence" value="ECO:0007669"/>
    <property type="project" value="Ensembl"/>
</dbReference>
<dbReference type="GO" id="GO:0030235">
    <property type="term" value="F:nitric-oxide synthase regulator activity"/>
    <property type="evidence" value="ECO:0007669"/>
    <property type="project" value="Ensembl"/>
</dbReference>
<dbReference type="GO" id="GO:0019901">
    <property type="term" value="F:protein kinase binding"/>
    <property type="evidence" value="ECO:0007669"/>
    <property type="project" value="Ensembl"/>
</dbReference>
<dbReference type="GO" id="GO:0098973">
    <property type="term" value="F:structural constituent of postsynaptic actin cytoskeleton"/>
    <property type="evidence" value="ECO:0007669"/>
    <property type="project" value="Ensembl"/>
</dbReference>
<dbReference type="GO" id="GO:0030957">
    <property type="term" value="F:Tat protein binding"/>
    <property type="evidence" value="ECO:0007669"/>
    <property type="project" value="Ensembl"/>
</dbReference>
<dbReference type="GO" id="GO:0141108">
    <property type="term" value="F:transporter regulator activity"/>
    <property type="evidence" value="ECO:0007669"/>
    <property type="project" value="Ensembl"/>
</dbReference>
<dbReference type="GO" id="GO:0034333">
    <property type="term" value="P:adherens junction assembly"/>
    <property type="evidence" value="ECO:0007669"/>
    <property type="project" value="Ensembl"/>
</dbReference>
<dbReference type="GO" id="GO:0045176">
    <property type="term" value="P:apical protein localization"/>
    <property type="evidence" value="ECO:0007669"/>
    <property type="project" value="Ensembl"/>
</dbReference>
<dbReference type="GO" id="GO:0048870">
    <property type="term" value="P:cell motility"/>
    <property type="evidence" value="ECO:0007669"/>
    <property type="project" value="Ensembl"/>
</dbReference>
<dbReference type="GO" id="GO:0072749">
    <property type="term" value="P:cellular response to cytochalasin B"/>
    <property type="evidence" value="ECO:0007669"/>
    <property type="project" value="Ensembl"/>
</dbReference>
<dbReference type="GO" id="GO:0007163">
    <property type="term" value="P:establishment or maintenance of cell polarity"/>
    <property type="evidence" value="ECO:0007669"/>
    <property type="project" value="Ensembl"/>
</dbReference>
<dbReference type="GO" id="GO:0001738">
    <property type="term" value="P:morphogenesis of a polarized epithelium"/>
    <property type="evidence" value="ECO:0007669"/>
    <property type="project" value="Ensembl"/>
</dbReference>
<dbReference type="GO" id="GO:1905168">
    <property type="term" value="P:positive regulation of double-strand break repair via homologous recombination"/>
    <property type="evidence" value="ECO:0007669"/>
    <property type="project" value="Ensembl"/>
</dbReference>
<dbReference type="GO" id="GO:0071896">
    <property type="term" value="P:protein localization to adherens junction"/>
    <property type="evidence" value="ECO:0007669"/>
    <property type="project" value="Ensembl"/>
</dbReference>
<dbReference type="GO" id="GO:0051726">
    <property type="term" value="P:regulation of cell cycle"/>
    <property type="evidence" value="ECO:0007669"/>
    <property type="project" value="Ensembl"/>
</dbReference>
<dbReference type="GO" id="GO:0051621">
    <property type="term" value="P:regulation of norepinephrine uptake"/>
    <property type="evidence" value="ECO:0007669"/>
    <property type="project" value="Ensembl"/>
</dbReference>
<dbReference type="GO" id="GO:1903076">
    <property type="term" value="P:regulation of protein localization to plasma membrane"/>
    <property type="evidence" value="ECO:0007669"/>
    <property type="project" value="Ensembl"/>
</dbReference>
<dbReference type="GO" id="GO:1900242">
    <property type="term" value="P:regulation of synaptic vesicle endocytosis"/>
    <property type="evidence" value="ECO:0007669"/>
    <property type="project" value="Ensembl"/>
</dbReference>
<dbReference type="GO" id="GO:0150111">
    <property type="term" value="P:regulation of transepithelial transport"/>
    <property type="evidence" value="ECO:0007669"/>
    <property type="project" value="Ensembl"/>
</dbReference>
<dbReference type="CDD" id="cd10224">
    <property type="entry name" value="ASKHA_NBD_actin"/>
    <property type="match status" value="1"/>
</dbReference>
<dbReference type="FunFam" id="3.30.420.40:FF:000131">
    <property type="entry name" value="Actin, alpha skeletal muscle"/>
    <property type="match status" value="1"/>
</dbReference>
<dbReference type="FunFam" id="3.30.420.40:FF:000291">
    <property type="entry name" value="Actin, alpha skeletal muscle"/>
    <property type="match status" value="1"/>
</dbReference>
<dbReference type="FunFam" id="3.90.640.10:FF:000047">
    <property type="entry name" value="Actin, alpha skeletal muscle"/>
    <property type="match status" value="1"/>
</dbReference>
<dbReference type="FunFam" id="3.30.420.40:FF:000058">
    <property type="entry name" value="Putative actin-related protein 5"/>
    <property type="match status" value="1"/>
</dbReference>
<dbReference type="Gene3D" id="3.30.420.40">
    <property type="match status" value="2"/>
</dbReference>
<dbReference type="Gene3D" id="3.90.640.10">
    <property type="entry name" value="Actin, Chain A, domain 4"/>
    <property type="match status" value="1"/>
</dbReference>
<dbReference type="InterPro" id="IPR004000">
    <property type="entry name" value="Actin"/>
</dbReference>
<dbReference type="InterPro" id="IPR020902">
    <property type="entry name" value="Actin/actin-like_CS"/>
</dbReference>
<dbReference type="InterPro" id="IPR004001">
    <property type="entry name" value="Actin_CS"/>
</dbReference>
<dbReference type="InterPro" id="IPR043129">
    <property type="entry name" value="ATPase_NBD"/>
</dbReference>
<dbReference type="PANTHER" id="PTHR11937">
    <property type="entry name" value="ACTIN"/>
    <property type="match status" value="1"/>
</dbReference>
<dbReference type="Pfam" id="PF00022">
    <property type="entry name" value="Actin"/>
    <property type="match status" value="1"/>
</dbReference>
<dbReference type="PRINTS" id="PR00190">
    <property type="entry name" value="ACTIN"/>
</dbReference>
<dbReference type="SMART" id="SM00268">
    <property type="entry name" value="ACTIN"/>
    <property type="match status" value="1"/>
</dbReference>
<dbReference type="SUPFAM" id="SSF53067">
    <property type="entry name" value="Actin-like ATPase domain"/>
    <property type="match status" value="2"/>
</dbReference>
<dbReference type="PROSITE" id="PS00406">
    <property type="entry name" value="ACTINS_1"/>
    <property type="match status" value="1"/>
</dbReference>
<dbReference type="PROSITE" id="PS00432">
    <property type="entry name" value="ACTINS_2"/>
    <property type="match status" value="1"/>
</dbReference>
<dbReference type="PROSITE" id="PS01132">
    <property type="entry name" value="ACTINS_ACT_LIKE"/>
    <property type="match status" value="1"/>
</dbReference>
<accession>Q5R6G0</accession>
<accession>Q5R582</accession>
<feature type="chain" id="PRO_0000291871" description="Actin, cytoplasmic 1">
    <location>
        <begin position="1"/>
        <end position="375"/>
    </location>
</feature>
<feature type="initiator methionine" description="Removed; alternate" evidence="2">
    <location>
        <position position="1"/>
    </location>
</feature>
<feature type="chain" id="PRO_0000367079" description="Actin, cytoplasmic 1, N-terminally processed">
    <location>
        <begin position="2"/>
        <end position="375"/>
    </location>
</feature>
<feature type="modified residue" description="N-acetylmethionine" evidence="2">
    <location>
        <position position="1"/>
    </location>
</feature>
<feature type="modified residue" description="N-acetylaspartate; in Actin, cytoplasmic 1, N-terminally processed" evidence="2">
    <location>
        <position position="2"/>
    </location>
</feature>
<feature type="modified residue" description="Methionine (R)-sulfoxide" evidence="3">
    <location>
        <position position="44"/>
    </location>
</feature>
<feature type="modified residue" description="Methionine (R)-sulfoxide" evidence="3">
    <location>
        <position position="47"/>
    </location>
</feature>
<feature type="modified residue" description="Tele-methylhistidine" evidence="3">
    <location>
        <position position="73"/>
    </location>
</feature>
<feature type="modified residue" description="N6-methyllysine" evidence="2">
    <location>
        <position position="84"/>
    </location>
</feature>
<feature type="sequence conflict" description="In Ref. 1; CAH93084." evidence="6" ref="1">
    <original>D</original>
    <variation>N</variation>
    <location>
        <position position="288"/>
    </location>
</feature>
<name>ACTB_PONAB</name>
<proteinExistence type="evidence at transcript level"/>
<gene>
    <name type="primary">ACTB</name>
</gene>